<protein>
    <recommendedName>
        <fullName evidence="1">Enolase-phosphatase E1</fullName>
        <ecNumber evidence="1">3.1.3.77</ecNumber>
    </recommendedName>
    <alternativeName>
        <fullName evidence="1">2,3-diketo-5-methylthio-1-phosphopentane phosphatase</fullName>
    </alternativeName>
</protein>
<sequence length="252" mass="28028">MPSTERVAKVVLVDIEGTTTSISFVHDVLFPYAKNNVQKFLEESWESSSEVKQIVRELQQVPQYAEYTATLRVPPKEVDVQVITGFVRYLIDKDLKVTPLKTLQGLIWQQGYETGELMGHVFNDVPGAFEAWREAGLRIAVYSSGSVAAQKLIFRYSIVGDLLTHLSAHFDTHVGHKQESQSYANIAQSLGEDPSHILFLTDIPGEAAAARSAGLQTIILQRPGNTPLTDDQKYSNELIADFSSLHTLQLPE</sequence>
<reference key="1">
    <citation type="journal article" date="2007" name="Nature">
        <title>Evolution of genes and genomes on the Drosophila phylogeny.</title>
        <authorList>
            <consortium name="Drosophila 12 genomes consortium"/>
        </authorList>
    </citation>
    <scope>NUCLEOTIDE SEQUENCE [LARGE SCALE GENOMIC DNA]</scope>
    <source>
        <strain>MSH-3 / Tucson 14011-0111.49</strain>
    </source>
</reference>
<keyword id="KW-0028">Amino-acid biosynthesis</keyword>
<keyword id="KW-0963">Cytoplasm</keyword>
<keyword id="KW-0378">Hydrolase</keyword>
<keyword id="KW-0460">Magnesium</keyword>
<keyword id="KW-0479">Metal-binding</keyword>
<keyword id="KW-0486">Methionine biosynthesis</keyword>
<keyword id="KW-0539">Nucleus</keyword>
<keyword id="KW-1185">Reference proteome</keyword>
<gene>
    <name type="ORF">GL22195</name>
</gene>
<dbReference type="EC" id="3.1.3.77" evidence="1"/>
<dbReference type="EMBL" id="CH479182">
    <property type="protein sequence ID" value="EDW34331.1"/>
    <property type="molecule type" value="Genomic_DNA"/>
</dbReference>
<dbReference type="SMR" id="B4GFE6"/>
<dbReference type="STRING" id="7234.B4GFE6"/>
<dbReference type="EnsemblMetazoa" id="FBtr0187810">
    <property type="protein sequence ID" value="FBpp0186302"/>
    <property type="gene ID" value="FBgn0159787"/>
</dbReference>
<dbReference type="EnsemblMetazoa" id="XM_002017195.2">
    <property type="protein sequence ID" value="XP_002017231.1"/>
    <property type="gene ID" value="LOC6591810"/>
</dbReference>
<dbReference type="GeneID" id="6591810"/>
<dbReference type="KEGG" id="dpe:6591810"/>
<dbReference type="CTD" id="40630"/>
<dbReference type="eggNOG" id="KOG2630">
    <property type="taxonomic scope" value="Eukaryota"/>
</dbReference>
<dbReference type="HOGENOM" id="CLU_023273_0_0_1"/>
<dbReference type="OMA" id="WEEEECW"/>
<dbReference type="OrthoDB" id="272500at2759"/>
<dbReference type="PhylomeDB" id="B4GFE6"/>
<dbReference type="UniPathway" id="UPA00904">
    <property type="reaction ID" value="UER00876"/>
</dbReference>
<dbReference type="UniPathway" id="UPA00904">
    <property type="reaction ID" value="UER00877"/>
</dbReference>
<dbReference type="Proteomes" id="UP000008744">
    <property type="component" value="Unassembled WGS sequence"/>
</dbReference>
<dbReference type="GO" id="GO:0005737">
    <property type="term" value="C:cytoplasm"/>
    <property type="evidence" value="ECO:0007669"/>
    <property type="project" value="UniProtKB-SubCell"/>
</dbReference>
<dbReference type="GO" id="GO:0005634">
    <property type="term" value="C:nucleus"/>
    <property type="evidence" value="ECO:0007669"/>
    <property type="project" value="UniProtKB-SubCell"/>
</dbReference>
<dbReference type="GO" id="GO:0043874">
    <property type="term" value="F:acireductone synthase activity"/>
    <property type="evidence" value="ECO:0007669"/>
    <property type="project" value="UniProtKB-EC"/>
</dbReference>
<dbReference type="GO" id="GO:0000287">
    <property type="term" value="F:magnesium ion binding"/>
    <property type="evidence" value="ECO:0007669"/>
    <property type="project" value="UniProtKB-UniRule"/>
</dbReference>
<dbReference type="GO" id="GO:0019509">
    <property type="term" value="P:L-methionine salvage from methylthioadenosine"/>
    <property type="evidence" value="ECO:0007669"/>
    <property type="project" value="UniProtKB-UniRule"/>
</dbReference>
<dbReference type="CDD" id="cd01629">
    <property type="entry name" value="HAD_EP"/>
    <property type="match status" value="1"/>
</dbReference>
<dbReference type="FunFam" id="1.10.720.60:FF:000007">
    <property type="entry name" value="Enolase-phosphatase E1"/>
    <property type="match status" value="1"/>
</dbReference>
<dbReference type="FunFam" id="3.40.50.1000:FF:000079">
    <property type="entry name" value="Enolase-phosphatase E1"/>
    <property type="match status" value="1"/>
</dbReference>
<dbReference type="Gene3D" id="1.10.720.60">
    <property type="match status" value="1"/>
</dbReference>
<dbReference type="Gene3D" id="3.40.50.1000">
    <property type="entry name" value="HAD superfamily/HAD-like"/>
    <property type="match status" value="1"/>
</dbReference>
<dbReference type="HAMAP" id="MF_01681">
    <property type="entry name" value="Salvage_MtnC"/>
    <property type="match status" value="1"/>
</dbReference>
<dbReference type="HAMAP" id="MF_03117">
    <property type="entry name" value="Salvage_MtnC_euk"/>
    <property type="match status" value="1"/>
</dbReference>
<dbReference type="InterPro" id="IPR023943">
    <property type="entry name" value="Enolase-ppase_E1"/>
</dbReference>
<dbReference type="InterPro" id="IPR027511">
    <property type="entry name" value="ENOPH1_eukaryotes"/>
</dbReference>
<dbReference type="InterPro" id="IPR036412">
    <property type="entry name" value="HAD-like_sf"/>
</dbReference>
<dbReference type="InterPro" id="IPR006439">
    <property type="entry name" value="HAD-SF_hydro_IA"/>
</dbReference>
<dbReference type="InterPro" id="IPR023214">
    <property type="entry name" value="HAD_sf"/>
</dbReference>
<dbReference type="NCBIfam" id="TIGR01691">
    <property type="entry name" value="enolase-ppase"/>
    <property type="match status" value="1"/>
</dbReference>
<dbReference type="NCBIfam" id="TIGR01549">
    <property type="entry name" value="HAD-SF-IA-v1"/>
    <property type="match status" value="1"/>
</dbReference>
<dbReference type="PANTHER" id="PTHR20371">
    <property type="entry name" value="ENOLASE-PHOSPHATASE E1"/>
    <property type="match status" value="1"/>
</dbReference>
<dbReference type="PANTHER" id="PTHR20371:SF1">
    <property type="entry name" value="ENOLASE-PHOSPHATASE E1"/>
    <property type="match status" value="1"/>
</dbReference>
<dbReference type="Pfam" id="PF00702">
    <property type="entry name" value="Hydrolase"/>
    <property type="match status" value="1"/>
</dbReference>
<dbReference type="SFLD" id="SFLDF00044">
    <property type="entry name" value="enolase-phosphatase"/>
    <property type="match status" value="1"/>
</dbReference>
<dbReference type="SFLD" id="SFLDS00003">
    <property type="entry name" value="Haloacid_Dehalogenase"/>
    <property type="match status" value="1"/>
</dbReference>
<dbReference type="SUPFAM" id="SSF56784">
    <property type="entry name" value="HAD-like"/>
    <property type="match status" value="1"/>
</dbReference>
<evidence type="ECO:0000255" key="1">
    <source>
        <dbReference type="HAMAP-Rule" id="MF_03117"/>
    </source>
</evidence>
<accession>B4GFE6</accession>
<name>ENOPH_DROPE</name>
<feature type="chain" id="PRO_0000393981" description="Enolase-phosphatase E1">
    <location>
        <begin position="1"/>
        <end position="252"/>
    </location>
</feature>
<feature type="binding site" evidence="1">
    <location>
        <position position="14"/>
    </location>
    <ligand>
        <name>Mg(2+)</name>
        <dbReference type="ChEBI" id="CHEBI:18420"/>
    </ligand>
</feature>
<feature type="binding site" evidence="1">
    <location>
        <position position="16"/>
    </location>
    <ligand>
        <name>Mg(2+)</name>
        <dbReference type="ChEBI" id="CHEBI:18420"/>
    </ligand>
</feature>
<feature type="binding site" evidence="1">
    <location>
        <begin position="143"/>
        <end position="144"/>
    </location>
    <ligand>
        <name>substrate</name>
    </ligand>
</feature>
<feature type="binding site" evidence="1">
    <location>
        <position position="177"/>
    </location>
    <ligand>
        <name>substrate</name>
    </ligand>
</feature>
<feature type="binding site" evidence="1">
    <location>
        <position position="202"/>
    </location>
    <ligand>
        <name>Mg(2+)</name>
        <dbReference type="ChEBI" id="CHEBI:18420"/>
    </ligand>
</feature>
<proteinExistence type="inferred from homology"/>
<comment type="function">
    <text evidence="1">Bifunctional enzyme that catalyzes the enolization of 2,3-diketo-5-methylthiopentyl-1-phosphate (DK-MTP-1-P) into the intermediate 2-hydroxy-3-keto-5-methylthiopentenyl-1-phosphate (HK-MTPenyl-1-P), which is then dephosphorylated to form the acireductone 1,2-dihydroxy-3-keto-5-methylthiopentene (DHK-MTPene).</text>
</comment>
<comment type="catalytic activity">
    <reaction evidence="1">
        <text>5-methylsulfanyl-2,3-dioxopentyl phosphate + H2O = 1,2-dihydroxy-5-(methylsulfanyl)pent-1-en-3-one + phosphate</text>
        <dbReference type="Rhea" id="RHEA:21700"/>
        <dbReference type="ChEBI" id="CHEBI:15377"/>
        <dbReference type="ChEBI" id="CHEBI:43474"/>
        <dbReference type="ChEBI" id="CHEBI:49252"/>
        <dbReference type="ChEBI" id="CHEBI:58828"/>
        <dbReference type="EC" id="3.1.3.77"/>
    </reaction>
</comment>
<comment type="cofactor">
    <cofactor evidence="1">
        <name>Mg(2+)</name>
        <dbReference type="ChEBI" id="CHEBI:18420"/>
    </cofactor>
    <text evidence="1">Binds 1 Mg(2+) ion per subunit.</text>
</comment>
<comment type="pathway">
    <text evidence="1">Amino-acid biosynthesis; L-methionine biosynthesis via salvage pathway; L-methionine from S-methyl-5-thio-alpha-D-ribose 1-phosphate: step 3/6.</text>
</comment>
<comment type="pathway">
    <text evidence="1">Amino-acid biosynthesis; L-methionine biosynthesis via salvage pathway; L-methionine from S-methyl-5-thio-alpha-D-ribose 1-phosphate: step 4/6.</text>
</comment>
<comment type="subunit">
    <text evidence="1">Monomer.</text>
</comment>
<comment type="subcellular location">
    <subcellularLocation>
        <location evidence="1">Cytoplasm</location>
    </subcellularLocation>
    <subcellularLocation>
        <location evidence="1">Nucleus</location>
    </subcellularLocation>
</comment>
<comment type="similarity">
    <text evidence="1">Belongs to the HAD-like hydrolase superfamily. MasA/MtnC family.</text>
</comment>
<organism>
    <name type="scientific">Drosophila persimilis</name>
    <name type="common">Fruit fly</name>
    <dbReference type="NCBI Taxonomy" id="7234"/>
    <lineage>
        <taxon>Eukaryota</taxon>
        <taxon>Metazoa</taxon>
        <taxon>Ecdysozoa</taxon>
        <taxon>Arthropoda</taxon>
        <taxon>Hexapoda</taxon>
        <taxon>Insecta</taxon>
        <taxon>Pterygota</taxon>
        <taxon>Neoptera</taxon>
        <taxon>Endopterygota</taxon>
        <taxon>Diptera</taxon>
        <taxon>Brachycera</taxon>
        <taxon>Muscomorpha</taxon>
        <taxon>Ephydroidea</taxon>
        <taxon>Drosophilidae</taxon>
        <taxon>Drosophila</taxon>
        <taxon>Sophophora</taxon>
    </lineage>
</organism>